<dbReference type="EC" id="2.1.1.199" evidence="1"/>
<dbReference type="EMBL" id="BX950851">
    <property type="protein sequence ID" value="CAG76722.1"/>
    <property type="molecule type" value="Genomic_DNA"/>
</dbReference>
<dbReference type="RefSeq" id="WP_011095322.1">
    <property type="nucleotide sequence ID" value="NC_004547.2"/>
</dbReference>
<dbReference type="SMR" id="Q6D0H5"/>
<dbReference type="STRING" id="218491.ECA3823"/>
<dbReference type="GeneID" id="57210442"/>
<dbReference type="KEGG" id="eca:ECA3823"/>
<dbReference type="PATRIC" id="fig|218491.5.peg.3878"/>
<dbReference type="eggNOG" id="COG0275">
    <property type="taxonomic scope" value="Bacteria"/>
</dbReference>
<dbReference type="HOGENOM" id="CLU_038422_2_0_6"/>
<dbReference type="OrthoDB" id="9806637at2"/>
<dbReference type="Proteomes" id="UP000007966">
    <property type="component" value="Chromosome"/>
</dbReference>
<dbReference type="GO" id="GO:0005737">
    <property type="term" value="C:cytoplasm"/>
    <property type="evidence" value="ECO:0007669"/>
    <property type="project" value="UniProtKB-SubCell"/>
</dbReference>
<dbReference type="GO" id="GO:0071424">
    <property type="term" value="F:rRNA (cytosine-N4-)-methyltransferase activity"/>
    <property type="evidence" value="ECO:0007669"/>
    <property type="project" value="UniProtKB-UniRule"/>
</dbReference>
<dbReference type="GO" id="GO:0070475">
    <property type="term" value="P:rRNA base methylation"/>
    <property type="evidence" value="ECO:0007669"/>
    <property type="project" value="UniProtKB-UniRule"/>
</dbReference>
<dbReference type="FunFam" id="1.10.150.170:FF:000001">
    <property type="entry name" value="Ribosomal RNA small subunit methyltransferase H"/>
    <property type="match status" value="1"/>
</dbReference>
<dbReference type="Gene3D" id="1.10.150.170">
    <property type="entry name" value="Putative methyltransferase TM0872, insert domain"/>
    <property type="match status" value="1"/>
</dbReference>
<dbReference type="Gene3D" id="3.40.50.150">
    <property type="entry name" value="Vaccinia Virus protein VP39"/>
    <property type="match status" value="1"/>
</dbReference>
<dbReference type="HAMAP" id="MF_01007">
    <property type="entry name" value="16SrRNA_methyltr_H"/>
    <property type="match status" value="1"/>
</dbReference>
<dbReference type="InterPro" id="IPR002903">
    <property type="entry name" value="RsmH"/>
</dbReference>
<dbReference type="InterPro" id="IPR023397">
    <property type="entry name" value="SAM-dep_MeTrfase_MraW_recog"/>
</dbReference>
<dbReference type="InterPro" id="IPR029063">
    <property type="entry name" value="SAM-dependent_MTases_sf"/>
</dbReference>
<dbReference type="NCBIfam" id="TIGR00006">
    <property type="entry name" value="16S rRNA (cytosine(1402)-N(4))-methyltransferase RsmH"/>
    <property type="match status" value="1"/>
</dbReference>
<dbReference type="PANTHER" id="PTHR11265:SF0">
    <property type="entry name" value="12S RRNA N4-METHYLCYTIDINE METHYLTRANSFERASE"/>
    <property type="match status" value="1"/>
</dbReference>
<dbReference type="PANTHER" id="PTHR11265">
    <property type="entry name" value="S-ADENOSYL-METHYLTRANSFERASE MRAW"/>
    <property type="match status" value="1"/>
</dbReference>
<dbReference type="Pfam" id="PF01795">
    <property type="entry name" value="Methyltransf_5"/>
    <property type="match status" value="1"/>
</dbReference>
<dbReference type="PIRSF" id="PIRSF004486">
    <property type="entry name" value="MraW"/>
    <property type="match status" value="1"/>
</dbReference>
<dbReference type="SUPFAM" id="SSF81799">
    <property type="entry name" value="Putative methyltransferase TM0872, insert domain"/>
    <property type="match status" value="1"/>
</dbReference>
<dbReference type="SUPFAM" id="SSF53335">
    <property type="entry name" value="S-adenosyl-L-methionine-dependent methyltransferases"/>
    <property type="match status" value="1"/>
</dbReference>
<name>RSMH_PECAS</name>
<organism>
    <name type="scientific">Pectobacterium atrosepticum (strain SCRI 1043 / ATCC BAA-672)</name>
    <name type="common">Erwinia carotovora subsp. atroseptica</name>
    <dbReference type="NCBI Taxonomy" id="218491"/>
    <lineage>
        <taxon>Bacteria</taxon>
        <taxon>Pseudomonadati</taxon>
        <taxon>Pseudomonadota</taxon>
        <taxon>Gammaproteobacteria</taxon>
        <taxon>Enterobacterales</taxon>
        <taxon>Pectobacteriaceae</taxon>
        <taxon>Pectobacterium</taxon>
    </lineage>
</organism>
<feature type="chain" id="PRO_0000108627" description="Ribosomal RNA small subunit methyltransferase H">
    <location>
        <begin position="1"/>
        <end position="314"/>
    </location>
</feature>
<feature type="region of interest" description="Disordered" evidence="2">
    <location>
        <begin position="276"/>
        <end position="296"/>
    </location>
</feature>
<feature type="binding site" evidence="1">
    <location>
        <begin position="35"/>
        <end position="37"/>
    </location>
    <ligand>
        <name>S-adenosyl-L-methionine</name>
        <dbReference type="ChEBI" id="CHEBI:59789"/>
    </ligand>
</feature>
<feature type="binding site" evidence="1">
    <location>
        <position position="55"/>
    </location>
    <ligand>
        <name>S-adenosyl-L-methionine</name>
        <dbReference type="ChEBI" id="CHEBI:59789"/>
    </ligand>
</feature>
<feature type="binding site" evidence="1">
    <location>
        <position position="79"/>
    </location>
    <ligand>
        <name>S-adenosyl-L-methionine</name>
        <dbReference type="ChEBI" id="CHEBI:59789"/>
    </ligand>
</feature>
<feature type="binding site" evidence="1">
    <location>
        <position position="101"/>
    </location>
    <ligand>
        <name>S-adenosyl-L-methionine</name>
        <dbReference type="ChEBI" id="CHEBI:59789"/>
    </ligand>
</feature>
<feature type="binding site" evidence="1">
    <location>
        <position position="108"/>
    </location>
    <ligand>
        <name>S-adenosyl-L-methionine</name>
        <dbReference type="ChEBI" id="CHEBI:59789"/>
    </ligand>
</feature>
<protein>
    <recommendedName>
        <fullName evidence="1">Ribosomal RNA small subunit methyltransferase H</fullName>
        <ecNumber evidence="1">2.1.1.199</ecNumber>
    </recommendedName>
    <alternativeName>
        <fullName evidence="1">16S rRNA m(4)C1402 methyltransferase</fullName>
    </alternativeName>
    <alternativeName>
        <fullName evidence="1">rRNA (cytosine-N(4)-)-methyltransferase RsmH</fullName>
    </alternativeName>
</protein>
<comment type="function">
    <text evidence="1">Specifically methylates the N4 position of cytidine in position 1402 (C1402) of 16S rRNA.</text>
</comment>
<comment type="catalytic activity">
    <reaction evidence="1">
        <text>cytidine(1402) in 16S rRNA + S-adenosyl-L-methionine = N(4)-methylcytidine(1402) in 16S rRNA + S-adenosyl-L-homocysteine + H(+)</text>
        <dbReference type="Rhea" id="RHEA:42928"/>
        <dbReference type="Rhea" id="RHEA-COMP:10286"/>
        <dbReference type="Rhea" id="RHEA-COMP:10287"/>
        <dbReference type="ChEBI" id="CHEBI:15378"/>
        <dbReference type="ChEBI" id="CHEBI:57856"/>
        <dbReference type="ChEBI" id="CHEBI:59789"/>
        <dbReference type="ChEBI" id="CHEBI:74506"/>
        <dbReference type="ChEBI" id="CHEBI:82748"/>
        <dbReference type="EC" id="2.1.1.199"/>
    </reaction>
</comment>
<comment type="subcellular location">
    <subcellularLocation>
        <location evidence="1">Cytoplasm</location>
    </subcellularLocation>
</comment>
<comment type="similarity">
    <text evidence="1">Belongs to the methyltransferase superfamily. RsmH family.</text>
</comment>
<gene>
    <name evidence="1" type="primary">rsmH</name>
    <name type="synonym">mraW</name>
    <name type="ordered locus">ECA3823</name>
</gene>
<reference key="1">
    <citation type="journal article" date="2004" name="Proc. Natl. Acad. Sci. U.S.A.">
        <title>Genome sequence of the enterobacterial phytopathogen Erwinia carotovora subsp. atroseptica and characterization of virulence factors.</title>
        <authorList>
            <person name="Bell K.S."/>
            <person name="Sebaihia M."/>
            <person name="Pritchard L."/>
            <person name="Holden M.T.G."/>
            <person name="Hyman L.J."/>
            <person name="Holeva M.C."/>
            <person name="Thomson N.R."/>
            <person name="Bentley S.D."/>
            <person name="Churcher L.J.C."/>
            <person name="Mungall K."/>
            <person name="Atkin R."/>
            <person name="Bason N."/>
            <person name="Brooks K."/>
            <person name="Chillingworth T."/>
            <person name="Clark K."/>
            <person name="Doggett J."/>
            <person name="Fraser A."/>
            <person name="Hance Z."/>
            <person name="Hauser H."/>
            <person name="Jagels K."/>
            <person name="Moule S."/>
            <person name="Norbertczak H."/>
            <person name="Ormond D."/>
            <person name="Price C."/>
            <person name="Quail M.A."/>
            <person name="Sanders M."/>
            <person name="Walker D."/>
            <person name="Whitehead S."/>
            <person name="Salmond G.P.C."/>
            <person name="Birch P.R.J."/>
            <person name="Parkhill J."/>
            <person name="Toth I.K."/>
        </authorList>
    </citation>
    <scope>NUCLEOTIDE SEQUENCE [LARGE SCALE GENOMIC DNA]</scope>
    <source>
        <strain>SCRI 1043 / ATCC BAA-672</strain>
    </source>
</reference>
<sequence length="314" mass="34695">MLENYKHTTVLLDEAVNGLNIRSGGIYIDGTFGRGGHSRLILSQLGPEGRLLAIDRDPQAIEAAKAIDDSRFSIIHGPFSAMADYVAELGLTGQIDGVLLDLGVSSPQLDDPERGFSFMRDGPLDMRMDPTRGSSAAEWLMKAEADDIVWVLKTFGEERFAKRIARAIVERNRTEPMTRTKELASLIAAASPIREKHKHPATRSFQAIRIYINSELEEIERALEGALSVLAPQGRLSVISFHSLEDRIVKRFIRHQSRGPQVPAGLPLTEEQLRSQGGQTLKPVGKKLMPSEAEVAENPRARSSVLRFAERLPA</sequence>
<keyword id="KW-0963">Cytoplasm</keyword>
<keyword id="KW-0489">Methyltransferase</keyword>
<keyword id="KW-1185">Reference proteome</keyword>
<keyword id="KW-0698">rRNA processing</keyword>
<keyword id="KW-0949">S-adenosyl-L-methionine</keyword>
<keyword id="KW-0808">Transferase</keyword>
<accession>Q6D0H5</accession>
<proteinExistence type="inferred from homology"/>
<evidence type="ECO:0000255" key="1">
    <source>
        <dbReference type="HAMAP-Rule" id="MF_01007"/>
    </source>
</evidence>
<evidence type="ECO:0000256" key="2">
    <source>
        <dbReference type="SAM" id="MobiDB-lite"/>
    </source>
</evidence>